<protein>
    <recommendedName>
        <fullName>Disintegrin and metalloproteinase domain-containing protein 10</fullName>
        <shortName>ADAM 10</shortName>
        <ecNumber evidence="1">3.4.24.81</ecNumber>
    </recommendedName>
    <alternativeName>
        <fullName>Kuzbanian protein homolog</fullName>
    </alternativeName>
    <alternativeName>
        <fullName>Mammalian disintegrin-metalloprotease</fullName>
    </alternativeName>
    <cdAntigenName>CD156c</cdAntigenName>
</protein>
<evidence type="ECO:0000250" key="1">
    <source>
        <dbReference type="UniProtKB" id="O14672"/>
    </source>
</evidence>
<evidence type="ECO:0000250" key="2">
    <source>
        <dbReference type="UniProtKB" id="O35598"/>
    </source>
</evidence>
<evidence type="ECO:0000250" key="3">
    <source>
        <dbReference type="UniProtKB" id="P03956"/>
    </source>
</evidence>
<evidence type="ECO:0000250" key="4">
    <source>
        <dbReference type="UniProtKB" id="P62080"/>
    </source>
</evidence>
<evidence type="ECO:0000250" key="5">
    <source>
        <dbReference type="UniProtKB" id="Q10741"/>
    </source>
</evidence>
<evidence type="ECO:0000255" key="6"/>
<evidence type="ECO:0000255" key="7">
    <source>
        <dbReference type="PROSITE-ProRule" id="PRU00068"/>
    </source>
</evidence>
<evidence type="ECO:0000255" key="8">
    <source>
        <dbReference type="PROSITE-ProRule" id="PRU00276"/>
    </source>
</evidence>
<evidence type="ECO:0000255" key="9">
    <source>
        <dbReference type="PROSITE-ProRule" id="PRU10095"/>
    </source>
</evidence>
<evidence type="ECO:0000256" key="10">
    <source>
        <dbReference type="SAM" id="MobiDB-lite"/>
    </source>
</evidence>
<evidence type="ECO:0000305" key="11"/>
<evidence type="ECO:0007744" key="12">
    <source>
    </source>
</evidence>
<accession>Q10743</accession>
<accession>A0A0G2K562</accession>
<keyword id="KW-0965">Cell junction</keyword>
<keyword id="KW-1003">Cell membrane</keyword>
<keyword id="KW-0966">Cell projection</keyword>
<keyword id="KW-0165">Cleavage on pair of basic residues</keyword>
<keyword id="KW-0963">Cytoplasm</keyword>
<keyword id="KW-0968">Cytoplasmic vesicle</keyword>
<keyword id="KW-1015">Disulfide bond</keyword>
<keyword id="KW-0325">Glycoprotein</keyword>
<keyword id="KW-0333">Golgi apparatus</keyword>
<keyword id="KW-0378">Hydrolase</keyword>
<keyword id="KW-0472">Membrane</keyword>
<keyword id="KW-0479">Metal-binding</keyword>
<keyword id="KW-0482">Metalloprotease</keyword>
<keyword id="KW-0914">Notch signaling pathway</keyword>
<keyword id="KW-0597">Phosphoprotein</keyword>
<keyword id="KW-0645">Protease</keyword>
<keyword id="KW-1185">Reference proteome</keyword>
<keyword id="KW-0729">SH3-binding</keyword>
<keyword id="KW-0732">Signal</keyword>
<keyword id="KW-0812">Transmembrane</keyword>
<keyword id="KW-1133">Transmembrane helix</keyword>
<keyword id="KW-0862">Zinc</keyword>
<keyword id="KW-0865">Zymogen</keyword>
<name>ADA10_RAT</name>
<dbReference type="EC" id="3.4.24.81" evidence="1"/>
<dbReference type="EMBL" id="Z48444">
    <property type="protein sequence ID" value="CAA88359.1"/>
    <property type="molecule type" value="mRNA"/>
</dbReference>
<dbReference type="EMBL" id="AABR07070609">
    <property type="status" value="NOT_ANNOTATED_CDS"/>
    <property type="molecule type" value="Genomic_DNA"/>
</dbReference>
<dbReference type="EMBL" id="CH474041">
    <property type="protein sequence ID" value="EDL84174.1"/>
    <property type="molecule type" value="Genomic_DNA"/>
</dbReference>
<dbReference type="EMBL" id="AABR07070614">
    <property type="status" value="NOT_ANNOTATED_CDS"/>
    <property type="molecule type" value="Genomic_DNA"/>
</dbReference>
<dbReference type="EMBL" id="AABR07070613">
    <property type="status" value="NOT_ANNOTATED_CDS"/>
    <property type="molecule type" value="Genomic_DNA"/>
</dbReference>
<dbReference type="EMBL" id="AABR07070612">
    <property type="status" value="NOT_ANNOTATED_CDS"/>
    <property type="molecule type" value="Genomic_DNA"/>
</dbReference>
<dbReference type="EMBL" id="AABR07070611">
    <property type="status" value="NOT_ANNOTATED_CDS"/>
    <property type="molecule type" value="Genomic_DNA"/>
</dbReference>
<dbReference type="EMBL" id="AABR07070610">
    <property type="status" value="NOT_ANNOTATED_CDS"/>
    <property type="molecule type" value="Genomic_DNA"/>
</dbReference>
<dbReference type="PIR" id="S52477">
    <property type="entry name" value="S52477"/>
</dbReference>
<dbReference type="RefSeq" id="NP_062127.1">
    <property type="nucleotide sequence ID" value="NM_019254.1"/>
</dbReference>
<dbReference type="SMR" id="Q10743"/>
<dbReference type="FunCoup" id="Q10743">
    <property type="interactions" value="4675"/>
</dbReference>
<dbReference type="STRING" id="10116.ENSRNOP00000073306"/>
<dbReference type="MEROPS" id="M12.210"/>
<dbReference type="GlyCosmos" id="Q10743">
    <property type="glycosylation" value="4 sites, No reported glycans"/>
</dbReference>
<dbReference type="GlyGen" id="Q10743">
    <property type="glycosylation" value="4 sites"/>
</dbReference>
<dbReference type="iPTMnet" id="Q10743"/>
<dbReference type="PhosphoSitePlus" id="Q10743"/>
<dbReference type="SwissPalm" id="Q10743"/>
<dbReference type="PaxDb" id="10116-ENSRNOP00000021066"/>
<dbReference type="Ensembl" id="ENSRNOT00000083255.2">
    <property type="protein sequence ID" value="ENSRNOP00000073306.1"/>
    <property type="gene ID" value="ENSRNOG00000054257.2"/>
</dbReference>
<dbReference type="GeneID" id="29650"/>
<dbReference type="KEGG" id="rno:29650"/>
<dbReference type="UCSC" id="RGD:2032">
    <property type="organism name" value="rat"/>
</dbReference>
<dbReference type="AGR" id="RGD:2032"/>
<dbReference type="CTD" id="102"/>
<dbReference type="RGD" id="2032">
    <property type="gene designation" value="Adam10"/>
</dbReference>
<dbReference type="eggNOG" id="KOG3658">
    <property type="taxonomic scope" value="Eukaryota"/>
</dbReference>
<dbReference type="GeneTree" id="ENSGT00940000160579"/>
<dbReference type="InParanoid" id="Q10743"/>
<dbReference type="OrthoDB" id="2149267at2759"/>
<dbReference type="PhylomeDB" id="Q10743"/>
<dbReference type="BRENDA" id="3.4.24.81">
    <property type="organism ID" value="5301"/>
</dbReference>
<dbReference type="Reactome" id="R-RNO-1474228">
    <property type="pathway name" value="Degradation of the extracellular matrix"/>
</dbReference>
<dbReference type="Reactome" id="R-RNO-381426">
    <property type="pathway name" value="Regulation of Insulin-like Growth Factor (IGF) transport and uptake by Insulin-like Growth Factor Binding Proteins (IGFBPs)"/>
</dbReference>
<dbReference type="Reactome" id="R-RNO-6798695">
    <property type="pathway name" value="Neutrophil degranulation"/>
</dbReference>
<dbReference type="Reactome" id="R-RNO-8957275">
    <property type="pathway name" value="Post-translational protein phosphorylation"/>
</dbReference>
<dbReference type="Reactome" id="R-RNO-9013507">
    <property type="pathway name" value="NOTCH3 Activation and Transmission of Signal to the Nucleus"/>
</dbReference>
<dbReference type="PRO" id="PR:Q10743"/>
<dbReference type="Proteomes" id="UP000002494">
    <property type="component" value="Chromosome 8"/>
</dbReference>
<dbReference type="Proteomes" id="UP000234681">
    <property type="component" value="Chromosome 8"/>
</dbReference>
<dbReference type="Bgee" id="ENSRNOG00000054257">
    <property type="expression patterns" value="Expressed in ileum and 19 other cell types or tissues"/>
</dbReference>
<dbReference type="GO" id="GO:0005912">
    <property type="term" value="C:adherens junction"/>
    <property type="evidence" value="ECO:0007669"/>
    <property type="project" value="UniProtKB-SubCell"/>
</dbReference>
<dbReference type="GO" id="GO:0030424">
    <property type="term" value="C:axon"/>
    <property type="evidence" value="ECO:0007669"/>
    <property type="project" value="UniProtKB-SubCell"/>
</dbReference>
<dbReference type="GO" id="GO:0009986">
    <property type="term" value="C:cell surface"/>
    <property type="evidence" value="ECO:0000314"/>
    <property type="project" value="RGD"/>
</dbReference>
<dbReference type="GO" id="GO:0030136">
    <property type="term" value="C:clathrin-coated vesicle"/>
    <property type="evidence" value="ECO:0007669"/>
    <property type="project" value="UniProtKB-SubCell"/>
</dbReference>
<dbReference type="GO" id="GO:0005737">
    <property type="term" value="C:cytoplasm"/>
    <property type="evidence" value="ECO:0000250"/>
    <property type="project" value="UniProtKB"/>
</dbReference>
<dbReference type="GO" id="GO:0030425">
    <property type="term" value="C:dendrite"/>
    <property type="evidence" value="ECO:0000314"/>
    <property type="project" value="RGD"/>
</dbReference>
<dbReference type="GO" id="GO:0043197">
    <property type="term" value="C:dendritic spine"/>
    <property type="evidence" value="ECO:0000314"/>
    <property type="project" value="SynGO-UCL"/>
</dbReference>
<dbReference type="GO" id="GO:0098978">
    <property type="term" value="C:glutamatergic synapse"/>
    <property type="evidence" value="ECO:0000314"/>
    <property type="project" value="SynGO"/>
</dbReference>
<dbReference type="GO" id="GO:0005794">
    <property type="term" value="C:Golgi apparatus"/>
    <property type="evidence" value="ECO:0000250"/>
    <property type="project" value="UniProtKB"/>
</dbReference>
<dbReference type="GO" id="GO:0000139">
    <property type="term" value="C:Golgi membrane"/>
    <property type="evidence" value="ECO:0007669"/>
    <property type="project" value="UniProtKB-SubCell"/>
</dbReference>
<dbReference type="GO" id="GO:0005798">
    <property type="term" value="C:Golgi-associated vesicle"/>
    <property type="evidence" value="ECO:0000250"/>
    <property type="project" value="UniProtKB"/>
</dbReference>
<dbReference type="GO" id="GO:0043025">
    <property type="term" value="C:neuronal cell body"/>
    <property type="evidence" value="ECO:0000314"/>
    <property type="project" value="RGD"/>
</dbReference>
<dbReference type="GO" id="GO:0005634">
    <property type="term" value="C:nucleus"/>
    <property type="evidence" value="ECO:0000250"/>
    <property type="project" value="UniProtKB"/>
</dbReference>
<dbReference type="GO" id="GO:0097038">
    <property type="term" value="C:perinuclear endoplasmic reticulum"/>
    <property type="evidence" value="ECO:0000266"/>
    <property type="project" value="RGD"/>
</dbReference>
<dbReference type="GO" id="GO:0005886">
    <property type="term" value="C:plasma membrane"/>
    <property type="evidence" value="ECO:0000266"/>
    <property type="project" value="RGD"/>
</dbReference>
<dbReference type="GO" id="GO:0046930">
    <property type="term" value="C:pore complex"/>
    <property type="evidence" value="ECO:0000266"/>
    <property type="project" value="RGD"/>
</dbReference>
<dbReference type="GO" id="GO:0098794">
    <property type="term" value="C:postsynapse"/>
    <property type="evidence" value="ECO:0000314"/>
    <property type="project" value="RGD"/>
</dbReference>
<dbReference type="GO" id="GO:0014069">
    <property type="term" value="C:postsynaptic density"/>
    <property type="evidence" value="ECO:0000266"/>
    <property type="project" value="RGD"/>
</dbReference>
<dbReference type="GO" id="GO:0045211">
    <property type="term" value="C:postsynaptic membrane"/>
    <property type="evidence" value="ECO:0000314"/>
    <property type="project" value="SynGO-UCL"/>
</dbReference>
<dbReference type="GO" id="GO:0097060">
    <property type="term" value="C:synaptic membrane"/>
    <property type="evidence" value="ECO:0000266"/>
    <property type="project" value="RGD"/>
</dbReference>
<dbReference type="GO" id="GO:0008021">
    <property type="term" value="C:synaptic vesicle"/>
    <property type="evidence" value="ECO:0000314"/>
    <property type="project" value="RGD"/>
</dbReference>
<dbReference type="GO" id="GO:0097197">
    <property type="term" value="C:tetraspanin-enriched microdomain"/>
    <property type="evidence" value="ECO:0000266"/>
    <property type="project" value="RGD"/>
</dbReference>
<dbReference type="GO" id="GO:0005802">
    <property type="term" value="C:trans-Golgi network"/>
    <property type="evidence" value="ECO:0000314"/>
    <property type="project" value="RGD"/>
</dbReference>
<dbReference type="GO" id="GO:0004175">
    <property type="term" value="F:endopeptidase activity"/>
    <property type="evidence" value="ECO:0000266"/>
    <property type="project" value="RGD"/>
</dbReference>
<dbReference type="GO" id="GO:0046872">
    <property type="term" value="F:metal ion binding"/>
    <property type="evidence" value="ECO:0007669"/>
    <property type="project" value="UniProtKB-KW"/>
</dbReference>
<dbReference type="GO" id="GO:0070573">
    <property type="term" value="F:metallodipeptidase activity"/>
    <property type="evidence" value="ECO:0000266"/>
    <property type="project" value="RGD"/>
</dbReference>
<dbReference type="GO" id="GO:0004222">
    <property type="term" value="F:metalloendopeptidase activity"/>
    <property type="evidence" value="ECO:0000314"/>
    <property type="project" value="RGD"/>
</dbReference>
<dbReference type="GO" id="GO:1902945">
    <property type="term" value="F:metalloendopeptidase activity involved in amyloid precursor protein catabolic process"/>
    <property type="evidence" value="ECO:0000266"/>
    <property type="project" value="RGD"/>
</dbReference>
<dbReference type="GO" id="GO:0008237">
    <property type="term" value="F:metallopeptidase activity"/>
    <property type="evidence" value="ECO:0000250"/>
    <property type="project" value="UniProtKB"/>
</dbReference>
<dbReference type="GO" id="GO:0042803">
    <property type="term" value="F:protein homodimerization activity"/>
    <property type="evidence" value="ECO:0000250"/>
    <property type="project" value="UniProtKB"/>
</dbReference>
<dbReference type="GO" id="GO:0019901">
    <property type="term" value="F:protein kinase binding"/>
    <property type="evidence" value="ECO:0000250"/>
    <property type="project" value="UniProtKB"/>
</dbReference>
<dbReference type="GO" id="GO:0017124">
    <property type="term" value="F:SH3 domain binding"/>
    <property type="evidence" value="ECO:0007669"/>
    <property type="project" value="UniProtKB-KW"/>
</dbReference>
<dbReference type="GO" id="GO:0034332">
    <property type="term" value="P:adherens junction organization"/>
    <property type="evidence" value="ECO:0000266"/>
    <property type="project" value="RGD"/>
</dbReference>
<dbReference type="GO" id="GO:0042987">
    <property type="term" value="P:amyloid precursor protein catabolic process"/>
    <property type="evidence" value="ECO:0000266"/>
    <property type="project" value="RGD"/>
</dbReference>
<dbReference type="GO" id="GO:0034205">
    <property type="term" value="P:amyloid-beta formation"/>
    <property type="evidence" value="ECO:0000315"/>
    <property type="project" value="SynGO-UCL"/>
</dbReference>
<dbReference type="GO" id="GO:0090102">
    <property type="term" value="P:cochlea development"/>
    <property type="evidence" value="ECO:0000266"/>
    <property type="project" value="RGD"/>
</dbReference>
<dbReference type="GO" id="GO:0051089">
    <property type="term" value="P:constitutive protein ectodomain proteolysis"/>
    <property type="evidence" value="ECO:0000266"/>
    <property type="project" value="RGD"/>
</dbReference>
<dbReference type="GO" id="GO:0038004">
    <property type="term" value="P:epidermal growth factor receptor ligand maturation"/>
    <property type="evidence" value="ECO:0000266"/>
    <property type="project" value="RGD"/>
</dbReference>
<dbReference type="GO" id="GO:0001701">
    <property type="term" value="P:in utero embryonic development"/>
    <property type="evidence" value="ECO:0000250"/>
    <property type="project" value="UniProtKB"/>
</dbReference>
<dbReference type="GO" id="GO:0006509">
    <property type="term" value="P:membrane protein ectodomain proteolysis"/>
    <property type="evidence" value="ECO:0000250"/>
    <property type="project" value="UniProtKB"/>
</dbReference>
<dbReference type="GO" id="GO:0042117">
    <property type="term" value="P:monocyte activation"/>
    <property type="evidence" value="ECO:0000266"/>
    <property type="project" value="RGD"/>
</dbReference>
<dbReference type="GO" id="GO:0007162">
    <property type="term" value="P:negative regulation of cell adhesion"/>
    <property type="evidence" value="ECO:0000250"/>
    <property type="project" value="UniProtKB"/>
</dbReference>
<dbReference type="GO" id="GO:0010629">
    <property type="term" value="P:negative regulation of gene expression"/>
    <property type="evidence" value="ECO:0000266"/>
    <property type="project" value="RGD"/>
</dbReference>
<dbReference type="GO" id="GO:0007219">
    <property type="term" value="P:Notch signaling pathway"/>
    <property type="evidence" value="ECO:0000250"/>
    <property type="project" value="UniProtKB"/>
</dbReference>
<dbReference type="GO" id="GO:0046931">
    <property type="term" value="P:pore complex assembly"/>
    <property type="evidence" value="ECO:0000266"/>
    <property type="project" value="RGD"/>
</dbReference>
<dbReference type="GO" id="GO:0043065">
    <property type="term" value="P:positive regulation of apoptotic process"/>
    <property type="evidence" value="ECO:0000315"/>
    <property type="project" value="RGD"/>
</dbReference>
<dbReference type="GO" id="GO:0030307">
    <property type="term" value="P:positive regulation of cell growth"/>
    <property type="evidence" value="ECO:0000266"/>
    <property type="project" value="RGD"/>
</dbReference>
<dbReference type="GO" id="GO:0030335">
    <property type="term" value="P:positive regulation of cell migration"/>
    <property type="evidence" value="ECO:0000266"/>
    <property type="project" value="RGD"/>
</dbReference>
<dbReference type="GO" id="GO:0008284">
    <property type="term" value="P:positive regulation of cell population proliferation"/>
    <property type="evidence" value="ECO:0000266"/>
    <property type="project" value="RGD"/>
</dbReference>
<dbReference type="GO" id="GO:0010976">
    <property type="term" value="P:positive regulation of neuron projection development"/>
    <property type="evidence" value="ECO:0000315"/>
    <property type="project" value="RGD"/>
</dbReference>
<dbReference type="GO" id="GO:0010820">
    <property type="term" value="P:positive regulation of T cell chemotaxis"/>
    <property type="evidence" value="ECO:0000266"/>
    <property type="project" value="RGD"/>
</dbReference>
<dbReference type="GO" id="GO:0099173">
    <property type="term" value="P:postsynapse organization"/>
    <property type="evidence" value="ECO:0000266"/>
    <property type="project" value="RGD"/>
</dbReference>
<dbReference type="GO" id="GO:0140249">
    <property type="term" value="P:protein catabolic process at postsynapse"/>
    <property type="evidence" value="ECO:0000266"/>
    <property type="project" value="RGD"/>
</dbReference>
<dbReference type="GO" id="GO:0006468">
    <property type="term" value="P:protein phosphorylation"/>
    <property type="evidence" value="ECO:0000250"/>
    <property type="project" value="UniProtKB"/>
</dbReference>
<dbReference type="GO" id="GO:0016485">
    <property type="term" value="P:protein processing"/>
    <property type="evidence" value="ECO:0000266"/>
    <property type="project" value="RGD"/>
</dbReference>
<dbReference type="GO" id="GO:0061001">
    <property type="term" value="P:regulation of dendritic spine morphogenesis"/>
    <property type="evidence" value="ECO:0000315"/>
    <property type="project" value="RGD"/>
</dbReference>
<dbReference type="GO" id="GO:0098696">
    <property type="term" value="P:regulation of neurotransmitter receptor localization to postsynaptic specialization membrane"/>
    <property type="evidence" value="ECO:0000266"/>
    <property type="project" value="RGD"/>
</dbReference>
<dbReference type="GO" id="GO:0008593">
    <property type="term" value="P:regulation of Notch signaling pathway"/>
    <property type="evidence" value="ECO:0000266"/>
    <property type="project" value="RGD"/>
</dbReference>
<dbReference type="GO" id="GO:0045670">
    <property type="term" value="P:regulation of osteoclast differentiation"/>
    <property type="evidence" value="ECO:0000303"/>
    <property type="project" value="RGD"/>
</dbReference>
<dbReference type="GO" id="GO:0099175">
    <property type="term" value="P:regulation of postsynapse organization"/>
    <property type="evidence" value="ECO:0000266"/>
    <property type="project" value="RGD"/>
</dbReference>
<dbReference type="GO" id="GO:1901342">
    <property type="term" value="P:regulation of vasculature development"/>
    <property type="evidence" value="ECO:0000266"/>
    <property type="project" value="RGD"/>
</dbReference>
<dbReference type="GO" id="GO:0097327">
    <property type="term" value="P:response to antineoplastic agent"/>
    <property type="evidence" value="ECO:0000270"/>
    <property type="project" value="RGD"/>
</dbReference>
<dbReference type="GO" id="GO:0034612">
    <property type="term" value="P:response to tumor necrosis factor"/>
    <property type="evidence" value="ECO:0000266"/>
    <property type="project" value="RGD"/>
</dbReference>
<dbReference type="GO" id="GO:0140448">
    <property type="term" value="P:signaling receptor ligand precursor processing"/>
    <property type="evidence" value="ECO:0000266"/>
    <property type="project" value="RGD"/>
</dbReference>
<dbReference type="GO" id="GO:0007283">
    <property type="term" value="P:spermatogenesis"/>
    <property type="evidence" value="ECO:0000270"/>
    <property type="project" value="RGD"/>
</dbReference>
<dbReference type="CDD" id="cd04270">
    <property type="entry name" value="ZnMc_TACE_like"/>
    <property type="match status" value="1"/>
</dbReference>
<dbReference type="FunFam" id="3.40.390.10:FF:000011">
    <property type="entry name" value="Disintegrin and metalloproteinase domain-containing protein 10"/>
    <property type="match status" value="1"/>
</dbReference>
<dbReference type="FunFam" id="4.10.70.10:FF:000002">
    <property type="entry name" value="disintegrin and metalloproteinase domain-containing protein 10"/>
    <property type="match status" value="1"/>
</dbReference>
<dbReference type="Gene3D" id="3.40.390.10">
    <property type="entry name" value="Collagenase (Catalytic Domain)"/>
    <property type="match status" value="1"/>
</dbReference>
<dbReference type="Gene3D" id="4.10.70.10">
    <property type="entry name" value="Disintegrin domain"/>
    <property type="match status" value="1"/>
</dbReference>
<dbReference type="InterPro" id="IPR034025">
    <property type="entry name" value="ADAM10_ADAM17"/>
</dbReference>
<dbReference type="InterPro" id="IPR049038">
    <property type="entry name" value="ADAM10_Cys-rich"/>
</dbReference>
<dbReference type="InterPro" id="IPR051489">
    <property type="entry name" value="ADAM_Metalloproteinase"/>
</dbReference>
<dbReference type="InterPro" id="IPR001762">
    <property type="entry name" value="Disintegrin_dom"/>
</dbReference>
<dbReference type="InterPro" id="IPR036436">
    <property type="entry name" value="Disintegrin_dom_sf"/>
</dbReference>
<dbReference type="InterPro" id="IPR024079">
    <property type="entry name" value="MetalloPept_cat_dom_sf"/>
</dbReference>
<dbReference type="InterPro" id="IPR001590">
    <property type="entry name" value="Peptidase_M12B"/>
</dbReference>
<dbReference type="PANTHER" id="PTHR45702">
    <property type="entry name" value="ADAM10/ADAM17 METALLOPEPTIDASE FAMILY MEMBER"/>
    <property type="match status" value="1"/>
</dbReference>
<dbReference type="PANTHER" id="PTHR45702:SF4">
    <property type="entry name" value="DISINTEGRIN AND METALLOPROTEINASE DOMAIN-CONTAINING PROTEIN 10"/>
    <property type="match status" value="1"/>
</dbReference>
<dbReference type="Pfam" id="PF21299">
    <property type="entry name" value="ADAM10_Cys-rich"/>
    <property type="match status" value="1"/>
</dbReference>
<dbReference type="Pfam" id="PF00200">
    <property type="entry name" value="Disintegrin"/>
    <property type="match status" value="1"/>
</dbReference>
<dbReference type="Pfam" id="PF13574">
    <property type="entry name" value="Reprolysin_2"/>
    <property type="match status" value="1"/>
</dbReference>
<dbReference type="SMART" id="SM00050">
    <property type="entry name" value="DISIN"/>
    <property type="match status" value="1"/>
</dbReference>
<dbReference type="SUPFAM" id="SSF57552">
    <property type="entry name" value="Blood coagulation inhibitor (disintegrin)"/>
    <property type="match status" value="1"/>
</dbReference>
<dbReference type="SUPFAM" id="SSF55486">
    <property type="entry name" value="Metalloproteases ('zincins'), catalytic domain"/>
    <property type="match status" value="1"/>
</dbReference>
<dbReference type="PROSITE" id="PS50215">
    <property type="entry name" value="ADAM_MEPRO"/>
    <property type="match status" value="1"/>
</dbReference>
<dbReference type="PROSITE" id="PS50214">
    <property type="entry name" value="DISINTEGRIN_2"/>
    <property type="match status" value="1"/>
</dbReference>
<dbReference type="PROSITE" id="PS00142">
    <property type="entry name" value="ZINC_PROTEASE"/>
    <property type="match status" value="1"/>
</dbReference>
<proteinExistence type="evidence at protein level"/>
<gene>
    <name type="primary">Adam10</name>
    <name type="synonym">Madm</name>
</gene>
<reference key="1">
    <citation type="journal article" date="1996" name="Biochem. J.">
        <title>Molecular cloning of MADM: a catalytically active mammalian disintegrin-metalloprotease expressed in various cell types.</title>
        <authorList>
            <person name="Howard L."/>
            <person name="Mitchell S."/>
            <person name="Lu X."/>
            <person name="Griffiths S."/>
            <person name="Glynn P."/>
        </authorList>
    </citation>
    <scope>NUCLEOTIDE SEQUENCE [MRNA]</scope>
    <source>
        <strain>Sprague-Dawley</strain>
        <tissue>Brain</tissue>
    </source>
</reference>
<reference key="2">
    <citation type="journal article" date="2004" name="Nature">
        <title>Genome sequence of the Brown Norway rat yields insights into mammalian evolution.</title>
        <authorList>
            <person name="Gibbs R.A."/>
            <person name="Weinstock G.M."/>
            <person name="Metzker M.L."/>
            <person name="Muzny D.M."/>
            <person name="Sodergren E.J."/>
            <person name="Scherer S."/>
            <person name="Scott G."/>
            <person name="Steffen D."/>
            <person name="Worley K.C."/>
            <person name="Burch P.E."/>
            <person name="Okwuonu G."/>
            <person name="Hines S."/>
            <person name="Lewis L."/>
            <person name="Deramo C."/>
            <person name="Delgado O."/>
            <person name="Dugan-Rocha S."/>
            <person name="Miner G."/>
            <person name="Morgan M."/>
            <person name="Hawes A."/>
            <person name="Gill R."/>
            <person name="Holt R.A."/>
            <person name="Adams M.D."/>
            <person name="Amanatides P.G."/>
            <person name="Baden-Tillson H."/>
            <person name="Barnstead M."/>
            <person name="Chin S."/>
            <person name="Evans C.A."/>
            <person name="Ferriera S."/>
            <person name="Fosler C."/>
            <person name="Glodek A."/>
            <person name="Gu Z."/>
            <person name="Jennings D."/>
            <person name="Kraft C.L."/>
            <person name="Nguyen T."/>
            <person name="Pfannkoch C.M."/>
            <person name="Sitter C."/>
            <person name="Sutton G.G."/>
            <person name="Venter J.C."/>
            <person name="Woodage T."/>
            <person name="Smith D."/>
            <person name="Lee H.-M."/>
            <person name="Gustafson E."/>
            <person name="Cahill P."/>
            <person name="Kana A."/>
            <person name="Doucette-Stamm L."/>
            <person name="Weinstock K."/>
            <person name="Fechtel K."/>
            <person name="Weiss R.B."/>
            <person name="Dunn D.M."/>
            <person name="Green E.D."/>
            <person name="Blakesley R.W."/>
            <person name="Bouffard G.G."/>
            <person name="De Jong P.J."/>
            <person name="Osoegawa K."/>
            <person name="Zhu B."/>
            <person name="Marra M."/>
            <person name="Schein J."/>
            <person name="Bosdet I."/>
            <person name="Fjell C."/>
            <person name="Jones S."/>
            <person name="Krzywinski M."/>
            <person name="Mathewson C."/>
            <person name="Siddiqui A."/>
            <person name="Wye N."/>
            <person name="McPherson J."/>
            <person name="Zhao S."/>
            <person name="Fraser C.M."/>
            <person name="Shetty J."/>
            <person name="Shatsman S."/>
            <person name="Geer K."/>
            <person name="Chen Y."/>
            <person name="Abramzon S."/>
            <person name="Nierman W.C."/>
            <person name="Havlak P.H."/>
            <person name="Chen R."/>
            <person name="Durbin K.J."/>
            <person name="Egan A."/>
            <person name="Ren Y."/>
            <person name="Song X.-Z."/>
            <person name="Li B."/>
            <person name="Liu Y."/>
            <person name="Qin X."/>
            <person name="Cawley S."/>
            <person name="Cooney A.J."/>
            <person name="D'Souza L.M."/>
            <person name="Martin K."/>
            <person name="Wu J.Q."/>
            <person name="Gonzalez-Garay M.L."/>
            <person name="Jackson A.R."/>
            <person name="Kalafus K.J."/>
            <person name="McLeod M.P."/>
            <person name="Milosavljevic A."/>
            <person name="Virk D."/>
            <person name="Volkov A."/>
            <person name="Wheeler D.A."/>
            <person name="Zhang Z."/>
            <person name="Bailey J.A."/>
            <person name="Eichler E.E."/>
            <person name="Tuzun E."/>
            <person name="Birney E."/>
            <person name="Mongin E."/>
            <person name="Ureta-Vidal A."/>
            <person name="Woodwark C."/>
            <person name="Zdobnov E."/>
            <person name="Bork P."/>
            <person name="Suyama M."/>
            <person name="Torrents D."/>
            <person name="Alexandersson M."/>
            <person name="Trask B.J."/>
            <person name="Young J.M."/>
            <person name="Huang H."/>
            <person name="Wang H."/>
            <person name="Xing H."/>
            <person name="Daniels S."/>
            <person name="Gietzen D."/>
            <person name="Schmidt J."/>
            <person name="Stevens K."/>
            <person name="Vitt U."/>
            <person name="Wingrove J."/>
            <person name="Camara F."/>
            <person name="Mar Alba M."/>
            <person name="Abril J.F."/>
            <person name="Guigo R."/>
            <person name="Smit A."/>
            <person name="Dubchak I."/>
            <person name="Rubin E.M."/>
            <person name="Couronne O."/>
            <person name="Poliakov A."/>
            <person name="Huebner N."/>
            <person name="Ganten D."/>
            <person name="Goesele C."/>
            <person name="Hummel O."/>
            <person name="Kreitler T."/>
            <person name="Lee Y.-A."/>
            <person name="Monti J."/>
            <person name="Schulz H."/>
            <person name="Zimdahl H."/>
            <person name="Himmelbauer H."/>
            <person name="Lehrach H."/>
            <person name="Jacob H.J."/>
            <person name="Bromberg S."/>
            <person name="Gullings-Handley J."/>
            <person name="Jensen-Seaman M.I."/>
            <person name="Kwitek A.E."/>
            <person name="Lazar J."/>
            <person name="Pasko D."/>
            <person name="Tonellato P.J."/>
            <person name="Twigger S."/>
            <person name="Ponting C.P."/>
            <person name="Duarte J.M."/>
            <person name="Rice S."/>
            <person name="Goodstadt L."/>
            <person name="Beatson S.A."/>
            <person name="Emes R.D."/>
            <person name="Winter E.E."/>
            <person name="Webber C."/>
            <person name="Brandt P."/>
            <person name="Nyakatura G."/>
            <person name="Adetobi M."/>
            <person name="Chiaromonte F."/>
            <person name="Elnitski L."/>
            <person name="Eswara P."/>
            <person name="Hardison R.C."/>
            <person name="Hou M."/>
            <person name="Kolbe D."/>
            <person name="Makova K."/>
            <person name="Miller W."/>
            <person name="Nekrutenko A."/>
            <person name="Riemer C."/>
            <person name="Schwartz S."/>
            <person name="Taylor J."/>
            <person name="Yang S."/>
            <person name="Zhang Y."/>
            <person name="Lindpaintner K."/>
            <person name="Andrews T.D."/>
            <person name="Caccamo M."/>
            <person name="Clamp M."/>
            <person name="Clarke L."/>
            <person name="Curwen V."/>
            <person name="Durbin R.M."/>
            <person name="Eyras E."/>
            <person name="Searle S.M."/>
            <person name="Cooper G.M."/>
            <person name="Batzoglou S."/>
            <person name="Brudno M."/>
            <person name="Sidow A."/>
            <person name="Stone E.A."/>
            <person name="Payseur B.A."/>
            <person name="Bourque G."/>
            <person name="Lopez-Otin C."/>
            <person name="Puente X.S."/>
            <person name="Chakrabarti K."/>
            <person name="Chatterji S."/>
            <person name="Dewey C."/>
            <person name="Pachter L."/>
            <person name="Bray N."/>
            <person name="Yap V.B."/>
            <person name="Caspi A."/>
            <person name="Tesler G."/>
            <person name="Pevzner P.A."/>
            <person name="Haussler D."/>
            <person name="Roskin K.M."/>
            <person name="Baertsch R."/>
            <person name="Clawson H."/>
            <person name="Furey T.S."/>
            <person name="Hinrichs A.S."/>
            <person name="Karolchik D."/>
            <person name="Kent W.J."/>
            <person name="Rosenbloom K.R."/>
            <person name="Trumbower H."/>
            <person name="Weirauch M."/>
            <person name="Cooper D.N."/>
            <person name="Stenson P.D."/>
            <person name="Ma B."/>
            <person name="Brent M."/>
            <person name="Arumugam M."/>
            <person name="Shteynberg D."/>
            <person name="Copley R.R."/>
            <person name="Taylor M.S."/>
            <person name="Riethman H."/>
            <person name="Mudunuri U."/>
            <person name="Peterson J."/>
            <person name="Guyer M."/>
            <person name="Felsenfeld A."/>
            <person name="Old S."/>
            <person name="Mockrin S."/>
            <person name="Collins F.S."/>
        </authorList>
    </citation>
    <scope>NUCLEOTIDE SEQUENCE [LARGE SCALE GENOMIC DNA]</scope>
    <source>
        <strain>Brown Norway</strain>
    </source>
</reference>
<reference key="3">
    <citation type="submission" date="2005-07" db="EMBL/GenBank/DDBJ databases">
        <authorList>
            <person name="Mural R.J."/>
            <person name="Adams M.D."/>
            <person name="Myers E.W."/>
            <person name="Smith H.O."/>
            <person name="Venter J.C."/>
        </authorList>
    </citation>
    <scope>NUCLEOTIDE SEQUENCE [LARGE SCALE GENOMIC DNA]</scope>
</reference>
<reference key="4">
    <citation type="journal article" date="2013" name="J. Proteome Res.">
        <title>Site-specific glycan-peptide analysis for determination of N-glycoproteome heterogeneity.</title>
        <authorList>
            <person name="Parker B.L."/>
            <person name="Thaysen-Andersen M."/>
            <person name="Solis N."/>
            <person name="Scott N.E."/>
            <person name="Larsen M.R."/>
            <person name="Graham M.E."/>
            <person name="Packer N.H."/>
            <person name="Cordwell S.J."/>
        </authorList>
    </citation>
    <scope>GLYCOSYLATION [LARGE SCALE ANALYSIS] AT ASN-279 AND ASN-440</scope>
    <scope>IDENTIFICATION BY MASS SPECTROMETRY [LARGE SCALE ANALYSIS]</scope>
    <source>
        <tissue>Brain</tissue>
    </source>
</reference>
<sequence>MVLPTVLILLLSWAAGLGGQYGNPLNKYIRHYEGLSYNVDSLHQKHQRAKRAVSHEDQFLLLDFHAHGRQFNLRMKRDTSLFSDEFKVETSNKVLDYDTSHIYTGHIYGEEGSFSHGSVVDGRFEGFIQTRGGTFYIEPAERYIKDRILPFHSVIYHEDDINYPHKYGPQGGCADHSVFERMRKYQMTGVEEGTRAHSEEHAASMGPELLRKKRTTLAERNTCQLYIQTDHLFFKYYGTREAVIAQISSHVKAIDTIYQTTDFSGIRNISFMVKRIRINTTSDEKDPTNPFRFPNIGVEKFLELNSEQNHDDYCLAYVFTDRDFDDGVLGLAWVGAPSGSSGGICEKSKLYSDGKKKSLNTGIITVQNYGSHVPPKVSHITFAHEVGHNFGSPHDSGTECTPGESKNLGQKENGNYIMYARATSGDKLNNNKFSLCSIRNISQVLEKKRNNCFVESGQPICGNGMVEQGEECDCGYSDQCKDECCFDANQPEGKKCKLKPGKQCSPSQGPCCTAQCAFKSKSEKCRDDSDCAKEGICNGFTALCPASDPKPNFTDCNRHTQVCINGQCAGSICEKYDLEECTCASSDGKDDKELCHVCCMKKMAPSTCASTGSLQWNKQFNGRTITLQPGSPCNDFRGYCDVFMRCRLVDADGPLARLKKAIFSPQLYENIAEWIVAHWWAVLLMGIALIMLMAGFIKICSVHTPSSNPKLPPPKPLPGTLKRRRPPQPIQQPPRQRPRESYQMGHMRR</sequence>
<feature type="signal peptide" evidence="6">
    <location>
        <begin position="1"/>
        <end position="18"/>
    </location>
</feature>
<feature type="propeptide" id="PRO_0000029070" evidence="5">
    <location>
        <begin position="19"/>
        <end position="214"/>
    </location>
</feature>
<feature type="chain" id="PRO_0000029071" description="Disintegrin and metalloproteinase domain-containing protein 10">
    <location>
        <begin position="215"/>
        <end position="749"/>
    </location>
</feature>
<feature type="topological domain" description="Extracellular" evidence="6">
    <location>
        <begin position="215"/>
        <end position="673"/>
    </location>
</feature>
<feature type="transmembrane region" description="Helical" evidence="6">
    <location>
        <begin position="674"/>
        <end position="697"/>
    </location>
</feature>
<feature type="topological domain" description="Cytoplasmic" evidence="6">
    <location>
        <begin position="698"/>
        <end position="749"/>
    </location>
</feature>
<feature type="domain" description="Peptidase M12B" evidence="8">
    <location>
        <begin position="221"/>
        <end position="457"/>
    </location>
</feature>
<feature type="domain" description="Disintegrin" evidence="7">
    <location>
        <begin position="458"/>
        <end position="552"/>
    </location>
</feature>
<feature type="region of interest" description="Disordered" evidence="10">
    <location>
        <begin position="705"/>
        <end position="749"/>
    </location>
</feature>
<feature type="region of interest" description="Interaction with AP2A1, AP2A2 and AP2M1" evidence="2">
    <location>
        <begin position="735"/>
        <end position="749"/>
    </location>
</feature>
<feature type="short sequence motif" description="Cysteine switch">
    <location>
        <begin position="171"/>
        <end position="178"/>
    </location>
</feature>
<feature type="short sequence motif" description="SH3-binding" evidence="6">
    <location>
        <begin position="709"/>
        <end position="716"/>
    </location>
</feature>
<feature type="short sequence motif" description="SH3-binding" evidence="6">
    <location>
        <begin position="723"/>
        <end position="729"/>
    </location>
</feature>
<feature type="active site" evidence="8 9">
    <location>
        <position position="385"/>
    </location>
</feature>
<feature type="binding site" description="in inhibited form" evidence="3">
    <location>
        <position position="173"/>
    </location>
    <ligand>
        <name>Zn(2+)</name>
        <dbReference type="ChEBI" id="CHEBI:29105"/>
        <note>catalytic</note>
    </ligand>
</feature>
<feature type="binding site" evidence="1">
    <location>
        <position position="384"/>
    </location>
    <ligand>
        <name>Zn(2+)</name>
        <dbReference type="ChEBI" id="CHEBI:29105"/>
        <note>catalytic</note>
    </ligand>
</feature>
<feature type="binding site" evidence="1">
    <location>
        <position position="388"/>
    </location>
    <ligand>
        <name>Zn(2+)</name>
        <dbReference type="ChEBI" id="CHEBI:29105"/>
        <note>catalytic</note>
    </ligand>
</feature>
<feature type="binding site" evidence="1">
    <location>
        <position position="394"/>
    </location>
    <ligand>
        <name>Zn(2+)</name>
        <dbReference type="ChEBI" id="CHEBI:29105"/>
        <note>catalytic</note>
    </ligand>
</feature>
<feature type="site" description="Cleavage; by furin and PCSK7" evidence="5">
    <location>
        <begin position="214"/>
        <end position="215"/>
    </location>
</feature>
<feature type="modified residue" description="Phosphothreonine" evidence="1">
    <location>
        <position position="720"/>
    </location>
</feature>
<feature type="glycosylation site" description="N-linked (GlcNAc...) asparagine" evidence="6">
    <location>
        <position position="268"/>
    </location>
</feature>
<feature type="glycosylation site" description="N-linked (GlcNAc...) asparagine" evidence="12">
    <location>
        <position position="279"/>
    </location>
</feature>
<feature type="glycosylation site" description="N-linked (GlcNAc...) asparagine" evidence="12">
    <location>
        <position position="440"/>
    </location>
</feature>
<feature type="glycosylation site" description="N-linked (GlcNAc...) asparagine" evidence="6">
    <location>
        <position position="552"/>
    </location>
</feature>
<feature type="disulfide bond" evidence="1">
    <location>
        <begin position="223"/>
        <end position="314"/>
    </location>
</feature>
<feature type="disulfide bond" evidence="1">
    <location>
        <begin position="345"/>
        <end position="452"/>
    </location>
</feature>
<feature type="disulfide bond" evidence="1">
    <location>
        <begin position="400"/>
        <end position="436"/>
    </location>
</feature>
<feature type="disulfide bond" evidence="1">
    <location>
        <begin position="461"/>
        <end position="496"/>
    </location>
</feature>
<feature type="disulfide bond" evidence="1">
    <location>
        <begin position="472"/>
        <end position="485"/>
    </location>
</feature>
<feature type="disulfide bond" evidence="1">
    <location>
        <begin position="474"/>
        <end position="480"/>
    </location>
</feature>
<feature type="disulfide bond" evidence="1">
    <location>
        <begin position="484"/>
        <end position="516"/>
    </location>
</feature>
<feature type="disulfide bond" evidence="1">
    <location>
        <begin position="504"/>
        <end position="512"/>
    </location>
</feature>
<feature type="disulfide bond" evidence="1">
    <location>
        <begin position="511"/>
        <end position="537"/>
    </location>
</feature>
<feature type="disulfide bond" evidence="1">
    <location>
        <begin position="525"/>
        <end position="544"/>
    </location>
</feature>
<feature type="disulfide bond" evidence="1">
    <location>
        <begin position="531"/>
        <end position="563"/>
    </location>
</feature>
<feature type="disulfide bond" evidence="1">
    <location>
        <begin position="556"/>
        <end position="568"/>
    </location>
</feature>
<feature type="disulfide bond" evidence="1">
    <location>
        <begin position="573"/>
        <end position="599"/>
    </location>
</feature>
<feature type="disulfide bond" evidence="1">
    <location>
        <begin position="581"/>
        <end position="608"/>
    </location>
</feature>
<feature type="disulfide bond" evidence="1">
    <location>
        <begin position="583"/>
        <end position="598"/>
    </location>
</feature>
<feature type="disulfide bond" evidence="1">
    <location>
        <begin position="595"/>
        <end position="640"/>
    </location>
</feature>
<feature type="disulfide bond" evidence="1">
    <location>
        <begin position="633"/>
        <end position="646"/>
    </location>
</feature>
<organism>
    <name type="scientific">Rattus norvegicus</name>
    <name type="common">Rat</name>
    <dbReference type="NCBI Taxonomy" id="10116"/>
    <lineage>
        <taxon>Eukaryota</taxon>
        <taxon>Metazoa</taxon>
        <taxon>Chordata</taxon>
        <taxon>Craniata</taxon>
        <taxon>Vertebrata</taxon>
        <taxon>Euteleostomi</taxon>
        <taxon>Mammalia</taxon>
        <taxon>Eutheria</taxon>
        <taxon>Euarchontoglires</taxon>
        <taxon>Glires</taxon>
        <taxon>Rodentia</taxon>
        <taxon>Myomorpha</taxon>
        <taxon>Muroidea</taxon>
        <taxon>Muridae</taxon>
        <taxon>Murinae</taxon>
        <taxon>Rattus</taxon>
    </lineage>
</organism>
<comment type="function">
    <text evidence="1 2">Transmembrane metalloprotease which mediates the ectodomain shedding of a myriad of transmembrane proteins, including adhesion proteins, growth factor precursors and cytokines being essential for development and tissue homeostasis. Associates with six members of the tetraspanin superfamily TspanC8 which regulate its exit from the endoplasmic reticulum and its substrate selectivity (By similarity). Cleaves the membrane-bound precursor of TNF-alpha at '76-Ala-|-Val-77' to its mature soluble form. Responsible for the proteolytical release of soluble JAM3 from endothelial cells surface. Responsible for the proteolytic release of several other cell-surface proteins, including heparin-binding epidermal growth-like factor, ephrin-A2, CD44, CDH2 and for constitutive and regulated alpha-secretase cleavage of amyloid precursor protein (APP). Contributes to the normal cleavage of the cellular prion protein. Involved in the cleavage of the adhesion molecule L1 at the cell surface and in released membrane vesicles, suggesting a vesicle-based protease activity (By similarity). Also controls the proteolytic processing of Notch and mediates lateral inhibition during neurogenesis (By similarity). Required for the development of type 1 transitional B cells into marginal zone B cells, probably by cleaving Notch (By similarity). Responsible for the FasL ectodomain shedding and for the generation of the remnant ADAM10-processed FasL (FasL APL) transmembrane form. Also cleaves the ectodomain of the integral membrane proteins CORIN and ITM2B (By similarity). Mediates the proteolytic cleavage of LAG3, leading to release the secreted form of LAG3 (By similarity). Mediates the proteolytic cleavage of IL6R and IL11RA, leading to the release of secreted forms of IL6R and IL11RA (By similarity). Enhances the cleavage of CHL1 by BACE1 (By similarity). Cleaves NRCAM (By similarity). Cleaves TREM2, resulting in shedding of the TREM2 ectodomain (By similarity). Involved in the development and maturation of glomerular and coronary vasculature (By similarity). During development of the cochlear organ of Corti, promotes pillar cell separation by forming a ternary complex with CADH1 and EPHA4 and cleaving CADH1 at adherens junctions (By similarity). May regulate the EFNA5-EPHA3 signaling (By similarity). Regulates leukocyte transmigration as a sheddase for the adherens junction protein VE-cadherin/CDH5 in endothelial cells (By similarity).</text>
</comment>
<comment type="catalytic activity">
    <reaction evidence="1">
        <text>Endopeptidase of broad specificity.</text>
        <dbReference type="EC" id="3.4.24.81"/>
    </reaction>
</comment>
<comment type="cofactor">
    <cofactor evidence="1">
        <name>Zn(2+)</name>
        <dbReference type="ChEBI" id="CHEBI:29105"/>
    </cofactor>
    <text evidence="1">Binds 1 zinc ion per subunit.</text>
</comment>
<comment type="activity regulation">
    <text evidence="1 5">Catalytically inactive when the propeptide is intact and associated with the mature enzyme (By similarity). The disintegrin and cysteine-rich regions modulate access of substrates to exerts an inhibitory effect on the cleavage of ADAM10 substrates (By similarity).</text>
</comment>
<comment type="subunit">
    <text evidence="1 2">Forms a ternary EFNA5-EPHA3-ADAM10 complex mediating EFNA5 extracellular domain shedding by ADAM10 which regulates the EFNA5-EPHA3 complex internalization and function, the cleavage occurs in trans, with ADAM10 and its substrate being on the membranes of opposing cells. Interacts with the clathrin adapter AP2 complex subunits AP2A1, AP2A2, AP2B1, and AP2M1; this interaction facilitates ADAM10 endocytosis from the plasma membrane during long-term potentiation in hippocampal neurons (By similarity). Forms a ternary complex composed of ADAM10, EPHA4 and CADH1; within the complex, ADAM10 cleaves CADH1 which disrupts adherens junctions (By similarity). Interacts with EPHA2 (By similarity). Interacts with NGF in a divalent cation-dependent manner. Interacts with TSPAN14; the interaction promotes ADAM10 maturation and cell surface expression. Interacts with TSPAN5, TSPAN10, TSPAN14, TSPAN15, TSPAN17 and TSPAN33; these interactions regulate ADAM10 substrate specificity, endocytosis and turnover (By similarity). Interacts (via extracellular domain) with TSPAN33 (via extracellular domain) and (via cytoplasmic domain) with AFDN; interaction with TSPAN33 allows the docking of ADAM10 to zonula adherens through a PDZ11-dependent interaction between TSPAN33 and PLEKHA7 while interaction with AFDN locks ADAM10 at zonula adherens (By similarity). Interacts with DLG1; this interaction recruits ADAM10 to the cell membrane during long-term depression in hippocampal neurons (By similarity). Interacts (via extracellular domain) with BACE1 (via extracellular domain) (By similarity). Interacts with FAM171A1 (By similarity).</text>
</comment>
<comment type="subcellular location">
    <subcellularLocation>
        <location evidence="1">Cell membrane</location>
        <topology evidence="11">Single-pass type I membrane protein</topology>
    </subcellularLocation>
    <subcellularLocation>
        <location evidence="1">Golgi apparatus membrane</location>
        <topology evidence="11">Single-pass type I membrane protein</topology>
    </subcellularLocation>
    <subcellularLocation>
        <location evidence="1">Cytoplasmic vesicle</location>
        <location evidence="1">Clathrin-coated vesicle</location>
    </subcellularLocation>
    <subcellularLocation>
        <location evidence="2">Cell projection</location>
        <location evidence="2">Axon</location>
    </subcellularLocation>
    <subcellularLocation>
        <location evidence="2">Cell projection</location>
        <location evidence="2">Dendrite</location>
    </subcellularLocation>
    <subcellularLocation>
        <location evidence="1">Cell junction</location>
        <location evidence="1">Adherens junction</location>
    </subcellularLocation>
    <subcellularLocation>
        <location evidence="1">Cytoplasm</location>
    </subcellularLocation>
    <text evidence="1 2">Is localized in the plasma membrane but is also expressed in the Golgi apparatus and in clathrin-coated vesicles derived likely from the Golgi (By similarity). During long term depression, it is recruited to the cell membrane by DLG1 (By similarity). The immature form is mainly located near cytoplasmic fibrillar structures, while the mature form is predominantly located at zonula adherens and the cell membrane (By similarity). The localization and clustering of mature ADAM10 to zonula adherens is regulated by AFDN, TSPAN33, PLEKHA7 and PDZD11 (By similarity).</text>
</comment>
<comment type="tissue specificity">
    <text>Expressed in brain, kidney, lung, spleen, ovary and testis.</text>
</comment>
<comment type="domain">
    <text evidence="4 5">The Cys-rich region C-terminal to the disintegrin domain functions as a substrate-recognition module, it recognizes the EFNA5-EPHA3 Complex but not the individual proteins. Both Cys-rich and stalk region are necessary for interaction with TSPAN5, TSPAN10, TSPAN14, TSPAN17, TSPAN33. Stalk region is sufficient for interaction with TSPAN15.</text>
</comment>
<comment type="domain">
    <text evidence="3">The propeptide keeps the metalloprotease in a latent form via a cysteine switch mechanism. This mechanism may be mediated by a highly conserved cysteine (Cys-173) in the propeptide, which interacts and neutralizes the zinc-coordinating HEXGHXXGXXHD catalytic core of the metalloprotease domain. The dissociation of the cysteine from the zinc ion upon the activation-peptide release activates the enzyme.</text>
</comment>
<comment type="PTM">
    <text evidence="5">The precursor is cleaved by furin and PCSK7.</text>
</comment>